<reference key="1">
    <citation type="submission" date="2000-09" db="EMBL/GenBank/DDBJ databases">
        <title>Complete sequence for the B1 strain of Newcastle disease virus.</title>
        <authorList>
            <person name="Sellers H.S."/>
            <person name="Seal B.S."/>
        </authorList>
    </citation>
    <scope>NUCLEOTIDE SEQUENCE [GENOMIC RNA]</scope>
</reference>
<feature type="chain" id="PRO_0000390627" description="RNA-directed RNA polymerase L">
    <location>
        <begin position="1"/>
        <end position="2204"/>
    </location>
</feature>
<feature type="domain" description="RdRp catalytic" evidence="5">
    <location>
        <begin position="634"/>
        <end position="818"/>
    </location>
</feature>
<feature type="domain" description="Mononegavirus-type SAM-dependent 2'-O-MTase" evidence="6">
    <location>
        <begin position="1745"/>
        <end position="1958"/>
    </location>
</feature>
<feature type="binding site" evidence="4">
    <location>
        <begin position="1775"/>
        <end position="1784"/>
    </location>
    <ligand>
        <name>ATP</name>
        <dbReference type="ChEBI" id="CHEBI:30616"/>
    </ligand>
</feature>
<comment type="function">
    <text evidence="2">RNA-directed RNA polymerase that catalyzes the transcription of viral mRNAs, their capping and polyadenylation. The template is composed of the viral RNA tightly encapsidated by the nucleoprotein (N). The viral polymerase binds to the genomic RNA at the 3' leader promoter, and transcribes subsequently all viral mRNAs with a decreasing efficiency. The first gene is the most transcribed, and the last the least transcribed. The viral phosphoprotein acts as a processivity factor. Capping is concomitant with initiation of mRNA transcription. Indeed, a GDP polyribonucleotidyl transferase (PRNTase) adds the cap structure when the nascent RNA chain length has reached few nucleotides. Ribose 2'-O methylation of viral mRNA cap precedes and facilitates subsequent guanine-N-7 methylation, both activities being carried by the viral polymerase. Polyadenylation of mRNAs occur by a stuttering mechanism at a slipery stop site present at the end viral genes. After finishing transcription of a mRNA, the polymerase can resume transcription of the downstream gene.</text>
</comment>
<comment type="function">
    <text evidence="2">RNA-directed RNA polymerase that catalyzes the replication of viral genomic RNA. The template is composed of the viral RNA tightly encapsidated by the nucleoprotein (N). The replicase mode is dependent on intracellular N protein concentration. In this mode, the polymerase replicates the whole viral genome without recognizing transcriptional signals, and the replicated genome is not caped or polyadenylated.</text>
</comment>
<comment type="catalytic activity">
    <reaction evidence="5">
        <text>RNA(n) + a ribonucleoside 5'-triphosphate = RNA(n+1) + diphosphate</text>
        <dbReference type="Rhea" id="RHEA:21248"/>
        <dbReference type="Rhea" id="RHEA-COMP:14527"/>
        <dbReference type="Rhea" id="RHEA-COMP:17342"/>
        <dbReference type="ChEBI" id="CHEBI:33019"/>
        <dbReference type="ChEBI" id="CHEBI:61557"/>
        <dbReference type="ChEBI" id="CHEBI:140395"/>
        <dbReference type="EC" id="2.7.7.48"/>
    </reaction>
</comment>
<comment type="catalytic activity">
    <reaction evidence="2">
        <text>a 5'-end (5'-triphosphoguanosine)-adenylyl-adenylyl-cytidylyl-adenosine in mRNA + 2 S-adenosyl-L-methionine = a 5'-end (N(7)-methyl 5'-triphosphoguanosine)-(2'-O-methyladenylyl)-adenylyl-cytidylyl-adenosine in mRNA + 2 S-adenosyl-L-homocysteine + H(+)</text>
        <dbReference type="Rhea" id="RHEA:65376"/>
        <dbReference type="Rhea" id="RHEA-COMP:16797"/>
        <dbReference type="Rhea" id="RHEA-COMP:16798"/>
        <dbReference type="ChEBI" id="CHEBI:15378"/>
        <dbReference type="ChEBI" id="CHEBI:57856"/>
        <dbReference type="ChEBI" id="CHEBI:59789"/>
        <dbReference type="ChEBI" id="CHEBI:156483"/>
        <dbReference type="ChEBI" id="CHEBI:156484"/>
        <dbReference type="EC" id="2.1.1.375"/>
    </reaction>
</comment>
<comment type="catalytic activity">
    <reaction evidence="2">
        <text>a 5'-end (5'-triphosphoguanosine)-adenylyl-adenylyl-cytidylyl-adenosine in mRNA + S-adenosyl-L-methionine = a 5'-end (5'-triphosphoguanosine)-(2'-O-methyladenylyl)-adenylyl-cytidylyl-adenosine in mRNA + S-adenosyl-L-homocysteine + H(+)</text>
        <dbReference type="Rhea" id="RHEA:65380"/>
        <dbReference type="Rhea" id="RHEA-COMP:16797"/>
        <dbReference type="Rhea" id="RHEA-COMP:16801"/>
        <dbReference type="ChEBI" id="CHEBI:15378"/>
        <dbReference type="ChEBI" id="CHEBI:57856"/>
        <dbReference type="ChEBI" id="CHEBI:59789"/>
        <dbReference type="ChEBI" id="CHEBI:156482"/>
        <dbReference type="ChEBI" id="CHEBI:156484"/>
    </reaction>
</comment>
<comment type="catalytic activity">
    <reaction evidence="3">
        <text>a 5'-end triphospho-adenylyl-adenylyl-cytidylyl-adenosine in mRNA + GDP + H(+) = a 5'-end (5'-triphosphoguanosine)-adenylyl-adenylyl-cytidylyl-adenosine in mRNA + diphosphate</text>
        <dbReference type="Rhea" id="RHEA:65436"/>
        <dbReference type="Rhea" id="RHEA-COMP:16797"/>
        <dbReference type="Rhea" id="RHEA-COMP:16799"/>
        <dbReference type="ChEBI" id="CHEBI:15378"/>
        <dbReference type="ChEBI" id="CHEBI:33019"/>
        <dbReference type="ChEBI" id="CHEBI:58189"/>
        <dbReference type="ChEBI" id="CHEBI:156484"/>
        <dbReference type="ChEBI" id="CHEBI:156503"/>
        <dbReference type="EC" id="2.7.7.88"/>
    </reaction>
</comment>
<comment type="catalytic activity">
    <reaction evidence="2">
        <text>a 5'-end (5'-triphosphoguanosine)-(2'-O-methyladenylyl)-adenylyl-cytidylyl-adenosine in mRNA + S-adenosyl-L-methionine = a 5'-end (N(7)-methyl 5'-triphosphoguanosine)-(2'-O-methyladenylyl)-adenylyl-cytidylyl-adenosine in mRNA + S-adenosyl-L-homocysteine</text>
        <dbReference type="Rhea" id="RHEA:65440"/>
        <dbReference type="Rhea" id="RHEA-COMP:16798"/>
        <dbReference type="Rhea" id="RHEA-COMP:16801"/>
        <dbReference type="ChEBI" id="CHEBI:57856"/>
        <dbReference type="ChEBI" id="CHEBI:59789"/>
        <dbReference type="ChEBI" id="CHEBI:156482"/>
        <dbReference type="ChEBI" id="CHEBI:156483"/>
    </reaction>
</comment>
<comment type="catalytic activity">
    <reaction evidence="3">
        <text>GTP + H2O = GDP + phosphate + H(+)</text>
        <dbReference type="Rhea" id="RHEA:19669"/>
        <dbReference type="ChEBI" id="CHEBI:15377"/>
        <dbReference type="ChEBI" id="CHEBI:15378"/>
        <dbReference type="ChEBI" id="CHEBI:37565"/>
        <dbReference type="ChEBI" id="CHEBI:43474"/>
        <dbReference type="ChEBI" id="CHEBI:58189"/>
    </reaction>
</comment>
<comment type="subunit">
    <text evidence="1">Interacts with the P protein.</text>
</comment>
<comment type="subcellular location">
    <subcellularLocation>
        <location evidence="7">Virion</location>
    </subcellularLocation>
    <subcellularLocation>
        <location evidence="1">Host cytoplasm</location>
    </subcellularLocation>
</comment>
<comment type="similarity">
    <text evidence="7">Belongs to the paramyxovirus L protein family.</text>
</comment>
<keyword id="KW-0067">ATP-binding</keyword>
<keyword id="KW-1035">Host cytoplasm</keyword>
<keyword id="KW-0378">Hydrolase</keyword>
<keyword id="KW-0489">Methyltransferase</keyword>
<keyword id="KW-0506">mRNA capping</keyword>
<keyword id="KW-0507">mRNA processing</keyword>
<keyword id="KW-0511">Multifunctional enzyme</keyword>
<keyword id="KW-0547">Nucleotide-binding</keyword>
<keyword id="KW-0548">Nucleotidyltransferase</keyword>
<keyword id="KW-1185">Reference proteome</keyword>
<keyword id="KW-0696">RNA-directed RNA polymerase</keyword>
<keyword id="KW-0949">S-adenosyl-L-methionine</keyword>
<keyword id="KW-0808">Transferase</keyword>
<keyword id="KW-0693">Viral RNA replication</keyword>
<keyword id="KW-0946">Virion</keyword>
<dbReference type="EC" id="2.7.7.48" evidence="3"/>
<dbReference type="EC" id="3.6.1.-" evidence="2"/>
<dbReference type="EC" id="2.7.7.88" evidence="2"/>
<dbReference type="EC" id="2.1.1.375" evidence="2"/>
<dbReference type="EMBL" id="AF309418">
    <property type="protein sequence ID" value="AAG36980.1"/>
    <property type="molecule type" value="Genomic_RNA"/>
</dbReference>
<dbReference type="RefSeq" id="NP_071471.1">
    <property type="nucleotide sequence ID" value="NC_002617.1"/>
</dbReference>
<dbReference type="SMR" id="Q9DLD3"/>
<dbReference type="Proteomes" id="UP000002328">
    <property type="component" value="Segment"/>
</dbReference>
<dbReference type="GO" id="GO:0030430">
    <property type="term" value="C:host cell cytoplasm"/>
    <property type="evidence" value="ECO:0007669"/>
    <property type="project" value="UniProtKB-SubCell"/>
</dbReference>
<dbReference type="GO" id="GO:0044423">
    <property type="term" value="C:virion component"/>
    <property type="evidence" value="ECO:0007669"/>
    <property type="project" value="UniProtKB-KW"/>
</dbReference>
<dbReference type="GO" id="GO:0005524">
    <property type="term" value="F:ATP binding"/>
    <property type="evidence" value="ECO:0007669"/>
    <property type="project" value="UniProtKB-KW"/>
</dbReference>
<dbReference type="GO" id="GO:0003924">
    <property type="term" value="F:GTPase activity"/>
    <property type="evidence" value="ECO:0007669"/>
    <property type="project" value="RHEA"/>
</dbReference>
<dbReference type="GO" id="GO:0004482">
    <property type="term" value="F:mRNA 5'-cap (guanine-N7-)-methyltransferase activity"/>
    <property type="evidence" value="ECO:0007669"/>
    <property type="project" value="InterPro"/>
</dbReference>
<dbReference type="GO" id="GO:0003968">
    <property type="term" value="F:RNA-directed RNA polymerase activity"/>
    <property type="evidence" value="ECO:0007669"/>
    <property type="project" value="UniProtKB-KW"/>
</dbReference>
<dbReference type="InterPro" id="IPR039736">
    <property type="entry name" value="L_poly_C"/>
</dbReference>
<dbReference type="InterPro" id="IPR026890">
    <property type="entry name" value="Mononeg_mRNAcap"/>
</dbReference>
<dbReference type="InterPro" id="IPR014023">
    <property type="entry name" value="Mononeg_RNA_pol_cat"/>
</dbReference>
<dbReference type="InterPro" id="IPR025786">
    <property type="entry name" value="Mononega_L_MeTrfase"/>
</dbReference>
<dbReference type="InterPro" id="IPR016269">
    <property type="entry name" value="RNA-dir_pol_paramyxovirus"/>
</dbReference>
<dbReference type="NCBIfam" id="TIGR04198">
    <property type="entry name" value="paramyx_RNAcap"/>
    <property type="match status" value="1"/>
</dbReference>
<dbReference type="Pfam" id="PF14318">
    <property type="entry name" value="Mononeg_mRNAcap"/>
    <property type="match status" value="1"/>
</dbReference>
<dbReference type="Pfam" id="PF00946">
    <property type="entry name" value="Mononeg_RNA_pol"/>
    <property type="match status" value="1"/>
</dbReference>
<dbReference type="PIRSF" id="PIRSF000830">
    <property type="entry name" value="RNA_pol_ParamyxoV"/>
    <property type="match status" value="1"/>
</dbReference>
<dbReference type="PROSITE" id="PS50526">
    <property type="entry name" value="RDRP_SSRNA_NEG_NONSEG"/>
    <property type="match status" value="1"/>
</dbReference>
<dbReference type="PROSITE" id="PS51590">
    <property type="entry name" value="SAM_MT_MNV_L"/>
    <property type="match status" value="1"/>
</dbReference>
<evidence type="ECO:0000250" key="1"/>
<evidence type="ECO:0000250" key="2">
    <source>
        <dbReference type="UniProtKB" id="P03523"/>
    </source>
</evidence>
<evidence type="ECO:0000250" key="3">
    <source>
        <dbReference type="UniProtKB" id="P28887"/>
    </source>
</evidence>
<evidence type="ECO:0000255" key="4"/>
<evidence type="ECO:0000255" key="5">
    <source>
        <dbReference type="PROSITE-ProRule" id="PRU00539"/>
    </source>
</evidence>
<evidence type="ECO:0000255" key="6">
    <source>
        <dbReference type="PROSITE-ProRule" id="PRU00923"/>
    </source>
</evidence>
<evidence type="ECO:0000305" key="7"/>
<organism>
    <name type="scientific">Newcastle disease virus (strain Chicken/United States/B1/48)</name>
    <name type="common">NDV</name>
    <dbReference type="NCBI Taxonomy" id="652953"/>
    <lineage>
        <taxon>Viruses</taxon>
        <taxon>Riboviria</taxon>
        <taxon>Orthornavirae</taxon>
        <taxon>Negarnaviricota</taxon>
        <taxon>Haploviricotina</taxon>
        <taxon>Monjiviricetes</taxon>
        <taxon>Mononegavirales</taxon>
        <taxon>Paramyxoviridae</taxon>
        <taxon>Avulavirinae</taxon>
        <taxon>Orthoavulavirus</taxon>
        <taxon>Orthoavulavirus javaense</taxon>
        <taxon>Avian paramyxovirus 1</taxon>
    </lineage>
</organism>
<accession>Q9DLD3</accession>
<gene>
    <name type="primary">L</name>
</gene>
<proteinExistence type="inferred from homology"/>
<organismHost>
    <name type="scientific">Gallus gallus</name>
    <name type="common">Chicken</name>
    <dbReference type="NCBI Taxonomy" id="9031"/>
</organismHost>
<name>L_NDVB1</name>
<sequence>MASSGPERAEHQIILPESHLSSPLVKHKLLYYWKLTGLPLPDECDFDHLILSRQWKKILESASPDTERMIKLGRAVHQTLNHNSRITGVLHPRCLEELANIEVPDSTNKFRKIEKKIQIHNTRYGELFTRLCTHIEKKLLGSSWSNNVPRSEEFSSIRTDPAFWFHSKWSTAKFAWLHIKQIQRHLIVAARTRSAANKLVMLTHKVGQVFVTPELVVVTHTNENKFTCLTQELVLMYADMMEGRDMVNIISTTAVHLRSLSEKIDDILRLIDALAKDLGNQVYDVVSLMEGFAYGAVQLLEPSGTFAGDFFAFNLQELKDILIGLLPNDIAESVTHAIATVFSGLEQNQAAEMLCLLRLWGHPLLESRIAAKAVRSQMCAPKMVDFDMILQVLSFFKGTIINGYRKKNAGVWPRVKVDTIYGKVIGQLHADSAEISHDIMLREYKSLSALEFEPCIEYDPVTNLSMFLKDKAIAHPNDNWLASFRRNLLSEDQKKHVKEATSTNRLLIEFLESNDFDPYKEMEYLTTLEYLRDDNVAVSYSLKEKEVKVNGRIFAKLTKKLRNCQVMAEGILADQIAPFFQGNGVIQDSISLTKSMLAMSQLSFNSNKKRITDCKERVSSNRNHDPKSKNRRRVATFITTDLQKYCLNWRYQTIKLFAHAINQLMGLPHFFEWIHLRLMDTTMFVGDPFNPPSDPTDCDLSRVPNDDIYIVSARGGIEGLCQKLWTMISIAAIQLAAARSHCRVACMVQGDNQVIAVTREVRSDDSPEMVLTQLHQASDNFFKELIHVNHLIGHNLKDRETIRSDTFFIYSKRIFKDGAILSQVLKNSSKLVLVSGDLSENTVMSCANIASTVARLCENGLPKDFCYYLNYIMSCVQTYFDSEFSITNNSHPDLNQSWIEDISFVHSYVLTPAQLGGLSNLQYSRLYTRNIGDPGTTAFAEIKRLEAVGLLSPNIMTNILTRPPGNGDWASLCNDPYSFNFETVASPNIVLKKHTQRVLFETCSNPLLSGVHTEDNEAEEKALAEFLLNQEVIHPRVAHAIMEASSVGRRKQIQGLVDTTNTVIKIALTRRPLGIKRLMRIVNYSSMHAMLFRDDVFSSSRSNHPLVSSNMCSLTLADYARNRSWSPLTGGRKILGVSNPDTIELVEGEILSVSGGCTRCDSGDEQFTWFHLPSNIELTDDTSKNPPMRVPYLGSKTQERRAASLAKIAHMSPHVKAALRASSVLIWAYGDNEVNWTAALTIAKSRCNVNLEYLRLLSPLPTAGNLQHRLDDGITQMTFTPASLYRCHLTFTYPMILKGCSLKKESKRGMWFTNRVMLLGLSLIESIFPMTTTRTYDEITLHLHSKFSCCIREAPVAVPFELLGVAPELRTVTSNKFMYDPSPVSEGDFARLDLAIFKSYELNLESYPTIELMNILSISSGKLIGQSVVSYDEDTSIKNDAIIVYDNTRNWISEAQNSDVVRLFEYAALEVLLHRSYQLYYLRVRGLDNIVLYMGDLYKNMPGILLSNIAATISHPVIHSRLHAVGLVNHDGSHQLADTDFIEMSAKLLVSCTRRVISGLYSGNKYDLLFPSVLDDNLNEKMLQLISRLCCLYTVLFATTREIPKIRGLTAEEKCSILTEYLLSDAVKPLLSPDQVSSIMSPNIITFPANLYYMSRKSLNLIREREDRDTILALLFPQEPLLEFPSVQDIGARVKDPFTRQPAAFLQELDLSAPARYDAFTLSQIHPELTSPNPEEDYLVRYLFRGIGTASSSWYKASHLLSVPEVRCARHGNSLYLAEGSGAIMSLLELHVPHETIYYNTLFSNEMNPPQRHFGPTPTQFLNSVVYRNLQAEVTCKDGFVQEFRPLWRENTEESDLTSDKAVGYITSAVPYRSVSLLHCDIEIPPGSNQSLLDQLAINLSLIAMHSVREGGVVIIKVLYAMGYYFHLLMNLFAPCSTKGYILSNGYACRGDMECYLVFVMGYLGGPTFVHEVVRMAKTLVQRHGTLLSKSDEITLTRLFTSQRQRVTDILSSPLPRLIKYLRKNIDTALIEAGGQPVRPFCAESLVSTLANITQITQIIASHIDTVIRSVIYMEAEGDLADTVFLFTPYNLSTDGKKRTSLKQCTRQILEVTILGLRVENLNKIGDIISLVLKGMISMEDLIPLRTYLKHSTCPKYLKAVLGITKLKEMFTDTSVLYLTRAQQKFYMKTIGNAVKGYYSNCDS</sequence>
<protein>
    <recommendedName>
        <fullName>RNA-directed RNA polymerase L</fullName>
        <shortName>Protein L</shortName>
    </recommendedName>
    <alternativeName>
        <fullName>Large structural protein</fullName>
    </alternativeName>
    <alternativeName>
        <fullName>Replicase</fullName>
    </alternativeName>
    <alternativeName>
        <fullName>Transcriptase</fullName>
    </alternativeName>
    <domain>
        <recommendedName>
            <fullName>RNA-directed RNA polymerase</fullName>
            <ecNumber evidence="3">2.7.7.48</ecNumber>
        </recommendedName>
    </domain>
    <domain>
        <recommendedName>
            <fullName evidence="2">GTP phosphohydrolase</fullName>
            <ecNumber evidence="2">3.6.1.-</ecNumber>
        </recommendedName>
    </domain>
    <domain>
        <recommendedName>
            <fullName evidence="7">GDP polyribonucleotidyltransferase</fullName>
            <ecNumber evidence="2">2.7.7.88</ecNumber>
        </recommendedName>
        <alternativeName>
            <fullName evidence="7">PRNTase</fullName>
        </alternativeName>
    </domain>
    <domain>
        <recommendedName>
            <fullName evidence="7">mRNA cap methyltransferase</fullName>
            <ecNumber evidence="2">2.1.1.375</ecNumber>
        </recommendedName>
        <alternativeName>
            <fullName evidence="2">mRNA (guanine-N(7)-)-methyltransferase</fullName>
            <shortName evidence="2">G-N7-MTase</shortName>
        </alternativeName>
        <alternativeName>
            <fullName evidence="2">mRNA (nucleoside-2'-O-)-methyltransferase</fullName>
            <shortName evidence="2">N1-2'-O-MTase</shortName>
        </alternativeName>
    </domain>
</protein>